<name>RL23_AGARV</name>
<proteinExistence type="inferred from homology"/>
<evidence type="ECO:0000255" key="1">
    <source>
        <dbReference type="HAMAP-Rule" id="MF_01369"/>
    </source>
</evidence>
<evidence type="ECO:0000305" key="2"/>
<reference key="1">
    <citation type="journal article" date="2009" name="Proc. Natl. Acad. Sci. U.S.A.">
        <title>Characterizing a model human gut microbiota composed of members of its two dominant bacterial phyla.</title>
        <authorList>
            <person name="Mahowald M.A."/>
            <person name="Rey F.E."/>
            <person name="Seedorf H."/>
            <person name="Turnbaugh P.J."/>
            <person name="Fulton R.S."/>
            <person name="Wollam A."/>
            <person name="Shah N."/>
            <person name="Wang C."/>
            <person name="Magrini V."/>
            <person name="Wilson R.K."/>
            <person name="Cantarel B.L."/>
            <person name="Coutinho P.M."/>
            <person name="Henrissat B."/>
            <person name="Crock L.W."/>
            <person name="Russell A."/>
            <person name="Verberkmoes N.C."/>
            <person name="Hettich R.L."/>
            <person name="Gordon J.I."/>
        </authorList>
    </citation>
    <scope>NUCLEOTIDE SEQUENCE [LARGE SCALE GENOMIC DNA]</scope>
    <source>
        <strain>ATCC 33656 / DSM 3377 / JCM 17463 / KCTC 5835 / LMG 30912 / VPI 0990</strain>
    </source>
</reference>
<keyword id="KW-0687">Ribonucleoprotein</keyword>
<keyword id="KW-0689">Ribosomal protein</keyword>
<keyword id="KW-0694">RNA-binding</keyword>
<keyword id="KW-0699">rRNA-binding</keyword>
<organism>
    <name type="scientific">Agathobacter rectalis (strain ATCC 33656 / DSM 3377 / JCM 17463 / KCTC 5835 / VPI 0990)</name>
    <name type="common">Eubacterium rectale</name>
    <dbReference type="NCBI Taxonomy" id="515619"/>
    <lineage>
        <taxon>Bacteria</taxon>
        <taxon>Bacillati</taxon>
        <taxon>Bacillota</taxon>
        <taxon>Clostridia</taxon>
        <taxon>Lachnospirales</taxon>
        <taxon>Lachnospiraceae</taxon>
        <taxon>Agathobacter</taxon>
    </lineage>
</organism>
<dbReference type="EMBL" id="CP001107">
    <property type="protein sequence ID" value="ACR74211.1"/>
    <property type="molecule type" value="Genomic_DNA"/>
</dbReference>
<dbReference type="RefSeq" id="WP_012741329.1">
    <property type="nucleotide sequence ID" value="NZ_CAXSYD010000003.1"/>
</dbReference>
<dbReference type="SMR" id="C4ZBS1"/>
<dbReference type="STRING" id="515619.EUBREC_0420"/>
<dbReference type="PaxDb" id="515619-EUBREC_0420"/>
<dbReference type="GeneID" id="86987330"/>
<dbReference type="KEGG" id="ere:EUBREC_0420"/>
<dbReference type="HOGENOM" id="CLU_037562_3_2_9"/>
<dbReference type="Proteomes" id="UP000001477">
    <property type="component" value="Chromosome"/>
</dbReference>
<dbReference type="GO" id="GO:1990904">
    <property type="term" value="C:ribonucleoprotein complex"/>
    <property type="evidence" value="ECO:0007669"/>
    <property type="project" value="UniProtKB-KW"/>
</dbReference>
<dbReference type="GO" id="GO:0005840">
    <property type="term" value="C:ribosome"/>
    <property type="evidence" value="ECO:0007669"/>
    <property type="project" value="UniProtKB-KW"/>
</dbReference>
<dbReference type="GO" id="GO:0019843">
    <property type="term" value="F:rRNA binding"/>
    <property type="evidence" value="ECO:0007669"/>
    <property type="project" value="UniProtKB-UniRule"/>
</dbReference>
<dbReference type="GO" id="GO:0003735">
    <property type="term" value="F:structural constituent of ribosome"/>
    <property type="evidence" value="ECO:0007669"/>
    <property type="project" value="InterPro"/>
</dbReference>
<dbReference type="GO" id="GO:0006412">
    <property type="term" value="P:translation"/>
    <property type="evidence" value="ECO:0007669"/>
    <property type="project" value="UniProtKB-UniRule"/>
</dbReference>
<dbReference type="FunFam" id="3.30.70.330:FF:000001">
    <property type="entry name" value="50S ribosomal protein L23"/>
    <property type="match status" value="1"/>
</dbReference>
<dbReference type="Gene3D" id="3.30.70.330">
    <property type="match status" value="1"/>
</dbReference>
<dbReference type="HAMAP" id="MF_01369_B">
    <property type="entry name" value="Ribosomal_uL23_B"/>
    <property type="match status" value="1"/>
</dbReference>
<dbReference type="InterPro" id="IPR012677">
    <property type="entry name" value="Nucleotide-bd_a/b_plait_sf"/>
</dbReference>
<dbReference type="InterPro" id="IPR013025">
    <property type="entry name" value="Ribosomal_uL23-like"/>
</dbReference>
<dbReference type="InterPro" id="IPR012678">
    <property type="entry name" value="Ribosomal_uL23/eL15/eS24_sf"/>
</dbReference>
<dbReference type="NCBIfam" id="NF004363">
    <property type="entry name" value="PRK05738.2-4"/>
    <property type="match status" value="1"/>
</dbReference>
<dbReference type="PANTHER" id="PTHR11620">
    <property type="entry name" value="60S RIBOSOMAL PROTEIN L23A"/>
    <property type="match status" value="1"/>
</dbReference>
<dbReference type="Pfam" id="PF00276">
    <property type="entry name" value="Ribosomal_L23"/>
    <property type="match status" value="1"/>
</dbReference>
<dbReference type="SUPFAM" id="SSF54189">
    <property type="entry name" value="Ribosomal proteins S24e, L23 and L15e"/>
    <property type="match status" value="1"/>
</dbReference>
<protein>
    <recommendedName>
        <fullName evidence="1">Large ribosomal subunit protein uL23</fullName>
    </recommendedName>
    <alternativeName>
        <fullName evidence="2">50S ribosomal protein L23</fullName>
    </alternativeName>
</protein>
<gene>
    <name evidence="1" type="primary">rplW</name>
    <name type="ordered locus">EUBREC_0420</name>
</gene>
<sequence length="99" mass="11088">MANVQYYDVILKPVVTEKSMNAMAEKKYTFLVHPDANKTMIKEAVERMFEGTKVAKVNTMNCEGKNKRRGMVTGKTAKTKKAIVQLTADSKDIEIFAGL</sequence>
<comment type="function">
    <text evidence="1">One of the early assembly proteins it binds 23S rRNA. One of the proteins that surrounds the polypeptide exit tunnel on the outside of the ribosome. Forms the main docking site for trigger factor binding to the ribosome.</text>
</comment>
<comment type="subunit">
    <text evidence="1">Part of the 50S ribosomal subunit. Contacts protein L29, and trigger factor when it is bound to the ribosome.</text>
</comment>
<comment type="similarity">
    <text evidence="1">Belongs to the universal ribosomal protein uL23 family.</text>
</comment>
<feature type="chain" id="PRO_1000215034" description="Large ribosomal subunit protein uL23">
    <location>
        <begin position="1"/>
        <end position="99"/>
    </location>
</feature>
<accession>C4ZBS1</accession>